<organism>
    <name type="scientific">Psychrobacter arcticus (strain DSM 17307 / VKM B-2377 / 273-4)</name>
    <dbReference type="NCBI Taxonomy" id="259536"/>
    <lineage>
        <taxon>Bacteria</taxon>
        <taxon>Pseudomonadati</taxon>
        <taxon>Pseudomonadota</taxon>
        <taxon>Gammaproteobacteria</taxon>
        <taxon>Moraxellales</taxon>
        <taxon>Moraxellaceae</taxon>
        <taxon>Psychrobacter</taxon>
    </lineage>
</organism>
<keyword id="KW-0963">Cytoplasm</keyword>
<keyword id="KW-0521">NADP</keyword>
<keyword id="KW-0560">Oxidoreductase</keyword>
<keyword id="KW-0671">Queuosine biosynthesis</keyword>
<keyword id="KW-1185">Reference proteome</keyword>
<protein>
    <recommendedName>
        <fullName evidence="1">NADPH-dependent 7-cyano-7-deazaguanine reductase</fullName>
        <ecNumber evidence="1">1.7.1.13</ecNumber>
    </recommendedName>
    <alternativeName>
        <fullName evidence="1">7-cyano-7-carbaguanine reductase</fullName>
    </alternativeName>
    <alternativeName>
        <fullName evidence="1">NADPH-dependent nitrile oxidoreductase</fullName>
    </alternativeName>
    <alternativeName>
        <fullName evidence="1">PreQ(0) reductase</fullName>
    </alternativeName>
</protein>
<reference key="1">
    <citation type="journal article" date="2010" name="Appl. Environ. Microbiol.">
        <title>The genome sequence of Psychrobacter arcticus 273-4, a psychroactive Siberian permafrost bacterium, reveals mechanisms for adaptation to low-temperature growth.</title>
        <authorList>
            <person name="Ayala-del-Rio H.L."/>
            <person name="Chain P.S."/>
            <person name="Grzymski J.J."/>
            <person name="Ponder M.A."/>
            <person name="Ivanova N."/>
            <person name="Bergholz P.W."/>
            <person name="Di Bartolo G."/>
            <person name="Hauser L."/>
            <person name="Land M."/>
            <person name="Bakermans C."/>
            <person name="Rodrigues D."/>
            <person name="Klappenbach J."/>
            <person name="Zarka D."/>
            <person name="Larimer F."/>
            <person name="Richardson P."/>
            <person name="Murray A."/>
            <person name="Thomashow M."/>
            <person name="Tiedje J.M."/>
        </authorList>
    </citation>
    <scope>NUCLEOTIDE SEQUENCE [LARGE SCALE GENOMIC DNA]</scope>
    <source>
        <strain>DSM 17307 / VKM B-2377 / 273-4</strain>
    </source>
</reference>
<name>QUEF_PSYA2</name>
<evidence type="ECO:0000255" key="1">
    <source>
        <dbReference type="HAMAP-Rule" id="MF_00817"/>
    </source>
</evidence>
<proteinExistence type="inferred from homology"/>
<feature type="chain" id="PRO_0000163050" description="NADPH-dependent 7-cyano-7-deazaguanine reductase">
    <location>
        <begin position="1"/>
        <end position="285"/>
    </location>
</feature>
<feature type="active site" description="Thioimide intermediate" evidence="1">
    <location>
        <position position="191"/>
    </location>
</feature>
<feature type="active site" description="Proton donor" evidence="1">
    <location>
        <position position="198"/>
    </location>
</feature>
<feature type="binding site" evidence="1">
    <location>
        <begin position="80"/>
        <end position="82"/>
    </location>
    <ligand>
        <name>substrate</name>
    </ligand>
</feature>
<feature type="binding site" evidence="1">
    <location>
        <begin position="82"/>
        <end position="83"/>
    </location>
    <ligand>
        <name>NADPH</name>
        <dbReference type="ChEBI" id="CHEBI:57783"/>
    </ligand>
</feature>
<feature type="binding site" evidence="1">
    <location>
        <begin position="231"/>
        <end position="232"/>
    </location>
    <ligand>
        <name>substrate</name>
    </ligand>
</feature>
<feature type="binding site" evidence="1">
    <location>
        <begin position="260"/>
        <end position="261"/>
    </location>
    <ligand>
        <name>NADPH</name>
        <dbReference type="ChEBI" id="CHEBI:57783"/>
    </ligand>
</feature>
<accession>Q4FUL7</accession>
<gene>
    <name evidence="1" type="primary">queF</name>
    <name type="ordered locus">Psyc_0428</name>
</gene>
<dbReference type="EC" id="1.7.1.13" evidence="1"/>
<dbReference type="EMBL" id="CP000082">
    <property type="protein sequence ID" value="AAZ18291.1"/>
    <property type="molecule type" value="Genomic_DNA"/>
</dbReference>
<dbReference type="RefSeq" id="WP_011279727.1">
    <property type="nucleotide sequence ID" value="NC_007204.1"/>
</dbReference>
<dbReference type="SMR" id="Q4FUL7"/>
<dbReference type="STRING" id="259536.Psyc_0428"/>
<dbReference type="KEGG" id="par:Psyc_0428"/>
<dbReference type="eggNOG" id="COG0780">
    <property type="taxonomic scope" value="Bacteria"/>
</dbReference>
<dbReference type="eggNOG" id="COG2904">
    <property type="taxonomic scope" value="Bacteria"/>
</dbReference>
<dbReference type="HOGENOM" id="CLU_054738_0_0_6"/>
<dbReference type="OrthoDB" id="9789995at2"/>
<dbReference type="UniPathway" id="UPA00392"/>
<dbReference type="Proteomes" id="UP000000546">
    <property type="component" value="Chromosome"/>
</dbReference>
<dbReference type="GO" id="GO:0005737">
    <property type="term" value="C:cytoplasm"/>
    <property type="evidence" value="ECO:0007669"/>
    <property type="project" value="UniProtKB-SubCell"/>
</dbReference>
<dbReference type="GO" id="GO:0033739">
    <property type="term" value="F:preQ1 synthase activity"/>
    <property type="evidence" value="ECO:0007669"/>
    <property type="project" value="UniProtKB-UniRule"/>
</dbReference>
<dbReference type="GO" id="GO:0008616">
    <property type="term" value="P:queuosine biosynthetic process"/>
    <property type="evidence" value="ECO:0007669"/>
    <property type="project" value="UniProtKB-UniRule"/>
</dbReference>
<dbReference type="GO" id="GO:0006400">
    <property type="term" value="P:tRNA modification"/>
    <property type="evidence" value="ECO:0007669"/>
    <property type="project" value="UniProtKB-UniRule"/>
</dbReference>
<dbReference type="Gene3D" id="3.30.1130.10">
    <property type="match status" value="2"/>
</dbReference>
<dbReference type="HAMAP" id="MF_00817">
    <property type="entry name" value="QueF_type2"/>
    <property type="match status" value="1"/>
</dbReference>
<dbReference type="InterPro" id="IPR043133">
    <property type="entry name" value="GTP-CH-I_C/QueF"/>
</dbReference>
<dbReference type="InterPro" id="IPR050084">
    <property type="entry name" value="NADPH_dep_7-cyano-7-deazaG_red"/>
</dbReference>
<dbReference type="InterPro" id="IPR029500">
    <property type="entry name" value="QueF"/>
</dbReference>
<dbReference type="InterPro" id="IPR029139">
    <property type="entry name" value="QueF_N"/>
</dbReference>
<dbReference type="InterPro" id="IPR016428">
    <property type="entry name" value="QueF_type2"/>
</dbReference>
<dbReference type="NCBIfam" id="TIGR03138">
    <property type="entry name" value="QueF"/>
    <property type="match status" value="1"/>
</dbReference>
<dbReference type="PANTHER" id="PTHR34354">
    <property type="entry name" value="NADPH-DEPENDENT 7-CYANO-7-DEAZAGUANINE REDUCTASE"/>
    <property type="match status" value="1"/>
</dbReference>
<dbReference type="PANTHER" id="PTHR34354:SF1">
    <property type="entry name" value="NADPH-DEPENDENT 7-CYANO-7-DEAZAGUANINE REDUCTASE"/>
    <property type="match status" value="1"/>
</dbReference>
<dbReference type="Pfam" id="PF14489">
    <property type="entry name" value="QueF"/>
    <property type="match status" value="1"/>
</dbReference>
<dbReference type="Pfam" id="PF14819">
    <property type="entry name" value="QueF_N"/>
    <property type="match status" value="1"/>
</dbReference>
<dbReference type="PIRSF" id="PIRSF004750">
    <property type="entry name" value="Nitrile_oxidored_YqcD_prd"/>
    <property type="match status" value="1"/>
</dbReference>
<dbReference type="SUPFAM" id="SSF55620">
    <property type="entry name" value="Tetrahydrobiopterin biosynthesis enzymes-like"/>
    <property type="match status" value="1"/>
</dbReference>
<sequence length="285" mass="32142">MSIHGILGEQTTDYPTEYSPETLYPIARSMGRDVIGWQNDKLEVGVDWWQAFELSWLNQQGISQVAIARFGIPANSPFIVESKSLKLYLNSINFTEFGSWAEVQKLIAEDLSKCVQAEVQVELFHLADRHSGLLIAQPDGICIDDALVNSTEKVALMLHPDASLLERDSSDAQISDGKTFSFYSNLLRSNCPVTNQPDWAALAVSITSKKVVNQANMLRYILSFRQHNGFHEQCVEQIFADLSQYYEPSKLMVRAWYTRRGGIDINPCRVSDIALLPVPSRLIRQ</sequence>
<comment type="function">
    <text evidence="1">Catalyzes the NADPH-dependent reduction of 7-cyano-7-deazaguanine (preQ0) to 7-aminomethyl-7-deazaguanine (preQ1).</text>
</comment>
<comment type="catalytic activity">
    <reaction evidence="1">
        <text>7-aminomethyl-7-carbaguanine + 2 NADP(+) = 7-cyano-7-deazaguanine + 2 NADPH + 3 H(+)</text>
        <dbReference type="Rhea" id="RHEA:13409"/>
        <dbReference type="ChEBI" id="CHEBI:15378"/>
        <dbReference type="ChEBI" id="CHEBI:45075"/>
        <dbReference type="ChEBI" id="CHEBI:57783"/>
        <dbReference type="ChEBI" id="CHEBI:58349"/>
        <dbReference type="ChEBI" id="CHEBI:58703"/>
        <dbReference type="EC" id="1.7.1.13"/>
    </reaction>
</comment>
<comment type="pathway">
    <text evidence="1">tRNA modification; tRNA-queuosine biosynthesis.</text>
</comment>
<comment type="subunit">
    <text evidence="1">Homodimer.</text>
</comment>
<comment type="subcellular location">
    <subcellularLocation>
        <location evidence="1">Cytoplasm</location>
    </subcellularLocation>
</comment>
<comment type="similarity">
    <text evidence="1">Belongs to the GTP cyclohydrolase I family. QueF type 2 subfamily.</text>
</comment>